<accession>P0CG45</accession>
<organism>
    <name type="scientific">Conus radiatus</name>
    <name type="common">Rayed cone</name>
    <dbReference type="NCBI Taxonomy" id="61198"/>
    <lineage>
        <taxon>Eukaryota</taxon>
        <taxon>Metazoa</taxon>
        <taxon>Spiralia</taxon>
        <taxon>Lophotrochozoa</taxon>
        <taxon>Mollusca</taxon>
        <taxon>Gastropoda</taxon>
        <taxon>Caenogastropoda</taxon>
        <taxon>Neogastropoda</taxon>
        <taxon>Conoidea</taxon>
        <taxon>Conidae</taxon>
        <taxon>Conus</taxon>
        <taxon>Phasmoconus</taxon>
    </lineage>
</organism>
<protein>
    <recommendedName>
        <fullName>Kappa-conotoxin RIIIJ</fullName>
        <shortName>Kappa-M-RIIIJ</shortName>
    </recommendedName>
</protein>
<sequence>LPPCCTPPKKHCPAPACKYKPCCKS</sequence>
<proteinExistence type="evidence at protein level"/>
<feature type="peptide" id="PRO_0000395613" description="Kappa-conotoxin RIIIJ">
    <location>
        <begin position="1"/>
        <end position="25"/>
    </location>
</feature>
<feature type="site" description="Significant for high potency for Kv1.2/KCNA2">
    <location>
        <position position="9"/>
    </location>
</feature>
<feature type="modified residue" description="4-hydroxyproline" evidence="2">
    <location>
        <position position="2"/>
    </location>
</feature>
<feature type="modified residue" description="4-hydroxyproline" evidence="2">
    <location>
        <position position="3"/>
    </location>
</feature>
<feature type="modified residue" description="4-hydroxyproline" evidence="2">
    <location>
        <position position="7"/>
    </location>
</feature>
<feature type="modified residue" description="4-hydroxyproline" evidence="2">
    <location>
        <position position="8"/>
    </location>
</feature>
<feature type="modified residue" description="4-hydroxyproline" evidence="2">
    <location>
        <position position="13"/>
    </location>
</feature>
<feature type="modified residue" description="4-hydroxyproline" evidence="2">
    <location>
        <position position="15"/>
    </location>
</feature>
<feature type="modified residue" description="4-hydroxyproline" evidence="2">
    <location>
        <position position="21"/>
    </location>
</feature>
<feature type="disulfide bond" evidence="1">
    <location>
        <begin position="4"/>
        <end position="17"/>
    </location>
</feature>
<feature type="disulfide bond" evidence="1">
    <location>
        <begin position="5"/>
        <end position="22"/>
    </location>
</feature>
<feature type="disulfide bond" evidence="1">
    <location>
        <begin position="12"/>
        <end position="23"/>
    </location>
</feature>
<feature type="mutagenesis site" description="11-fold decrease in potency for Kv1.2/KCNA2." evidence="2">
    <original>TPPKKH</original>
    <variation>SLNLRL</variation>
    <location>
        <begin position="6"/>
        <end position="11"/>
    </location>
</feature>
<feature type="mutagenesis site" description="2-fold decrease in potency for Kv1.2/KCNA2." evidence="2">
    <original>TPP</original>
    <variation>SLN</variation>
    <location>
        <begin position="6"/>
        <end position="8"/>
    </location>
</feature>
<feature type="mutagenesis site" description="10-fold decrease in potency for Kv1.2/KCNA2." evidence="2">
    <original>KKH</original>
    <variation>LRL</variation>
    <location>
        <begin position="9"/>
        <end position="11"/>
    </location>
</feature>
<feature type="mutagenesis site" description="1.5-fold decrease in potency for Kv1.2/KCNA2." evidence="2">
    <original>KH</original>
    <variation>RL</variation>
    <location>
        <begin position="10"/>
        <end position="11"/>
    </location>
</feature>
<keyword id="KW-0002">3D-structure</keyword>
<keyword id="KW-0903">Direct protein sequencing</keyword>
<keyword id="KW-1015">Disulfide bond</keyword>
<keyword id="KW-0379">Hydroxylation</keyword>
<keyword id="KW-0872">Ion channel impairing toxin</keyword>
<keyword id="KW-0528">Neurotoxin</keyword>
<keyword id="KW-0632">Potassium channel impairing toxin</keyword>
<keyword id="KW-0964">Secreted</keyword>
<keyword id="KW-0800">Toxin</keyword>
<keyword id="KW-1220">Voltage-gated potassium channel impairing toxin</keyword>
<reference key="1">
    <citation type="journal article" date="2010" name="J. Biol. Chem.">
        <title>Biochemical characterization of kappaM-RIIIJ, a Kv1.2 channel blocker: evaluation of cardioprotective effects of kappaM-conotoxins.</title>
        <authorList>
            <person name="Chen P."/>
            <person name="Dendorfer A."/>
            <person name="Finol-Urdaneta R.K."/>
            <person name="Terlau H."/>
            <person name="Olivera B.M."/>
        </authorList>
    </citation>
    <scope>PROTEIN SEQUENCE</scope>
    <scope>FUNCTION</scope>
    <scope>TOXIN TARGET</scope>
    <scope>ASSAY ON RAT ISCHEMIA/REPERFUSION MODEL</scope>
    <scope>MUTAGENESIS OF 6-THR--HIS-11; 6-THR--PRO-8; 9-LYS--HIS-11 AND 10-LYS-HIS-11</scope>
    <scope>SITE</scope>
    <scope>HYDROXYLATION AT PRO-2; PRO-3; PRO-7; PRO-8; PRO-13; PRO-15 AND PRO-21</scope>
    <scope>MASS SPECTROMETRY</scope>
    <source>
        <tissue>Venom</tissue>
    </source>
</reference>
<evidence type="ECO:0000250" key="1">
    <source>
        <dbReference type="UniProtKB" id="P01523"/>
    </source>
</evidence>
<evidence type="ECO:0000269" key="2">
    <source>
    </source>
</evidence>
<evidence type="ECO:0000305" key="3"/>
<evidence type="ECO:0000305" key="4">
    <source>
    </source>
</evidence>
<dbReference type="PDB" id="9KK0">
    <property type="method" value="NMR"/>
    <property type="chains" value="A=1-25"/>
</dbReference>
<dbReference type="PDBsum" id="9KK0"/>
<dbReference type="SMR" id="P0CG45"/>
<dbReference type="GO" id="GO:0005576">
    <property type="term" value="C:extracellular region"/>
    <property type="evidence" value="ECO:0007669"/>
    <property type="project" value="UniProtKB-SubCell"/>
</dbReference>
<dbReference type="GO" id="GO:0019870">
    <property type="term" value="F:potassium channel inhibitor activity"/>
    <property type="evidence" value="ECO:0000314"/>
    <property type="project" value="CACAO"/>
</dbReference>
<dbReference type="GO" id="GO:0090729">
    <property type="term" value="F:toxin activity"/>
    <property type="evidence" value="ECO:0007669"/>
    <property type="project" value="UniProtKB-KW"/>
</dbReference>
<comment type="function">
    <text evidence="2">Kappa-conotoxins inhibits voltage-gated potassium channels. This toxin dose-dependently and reversibly inhibits the Kv1.2/KCNA2 channel in mammalia. Does not exert protective effect on cardiac tissue when administered after an ischemic event.</text>
</comment>
<comment type="subcellular location">
    <subcellularLocation>
        <location>Secreted</location>
    </subcellularLocation>
</comment>
<comment type="tissue specificity">
    <text>Expressed by the venom duct.</text>
</comment>
<comment type="domain">
    <text>The cysteine framework is III (CC-C-C-CC). Classified in the M-4 branch, since 4 residues stand between the fourth and the fifth cysteine residues.</text>
</comment>
<comment type="mass spectrometry">
    <text>monoisotopic.</text>
</comment>
<comment type="miscellaneous">
    <text evidence="4">Negative results: has no or very low potency for Kv1.1/KCNA1, Kv1.3/KCNA3, Kv1.4/KCNA4, Kv1.5/KCNA5, Kv1.6/KCNA6, Kv7.2/KCNQ2-Kv7.3/KCNQ3, and KCa1.1/KCNMA1.</text>
</comment>
<comment type="similarity">
    <text evidence="3">Belongs to the conotoxin M superfamily.</text>
</comment>
<name>CM3J_CONRA</name>